<proteinExistence type="inferred from homology"/>
<reference key="1">
    <citation type="journal article" date="1993" name="Gene">
        <title>Sequence analysis of the region downstream from a peptidoglycan hydrolase-encoding gene from Staphylococcus aureus NCTC8325.</title>
        <authorList>
            <person name="Borchardt S.A."/>
            <person name="Babwah A.V."/>
            <person name="Jayaswal R.K."/>
        </authorList>
    </citation>
    <scope>NUCLEOTIDE SEQUENCE [GENOMIC DNA]</scope>
</reference>
<reference key="2">
    <citation type="book" date="2006" name="Gram positive pathogens, 2nd edition">
        <title>The Staphylococcus aureus NCTC 8325 genome.</title>
        <editorList>
            <person name="Fischetti V."/>
            <person name="Novick R."/>
            <person name="Ferretti J."/>
            <person name="Portnoy D."/>
            <person name="Rood J."/>
        </editorList>
        <authorList>
            <person name="Gillaspy A.F."/>
            <person name="Worrell V."/>
            <person name="Orvis J."/>
            <person name="Roe B.A."/>
            <person name="Dyer D.W."/>
            <person name="Iandolo J.J."/>
        </authorList>
    </citation>
    <scope>NUCLEOTIDE SEQUENCE [LARGE SCALE GENOMIC DNA]</scope>
    <source>
        <strain>NCTC 8325 / PS 47</strain>
    </source>
</reference>
<name>Y2013_STAA8</name>
<protein>
    <recommendedName>
        <fullName>Uncharacterized protein SAOUHSC_02013</fullName>
    </recommendedName>
    <alternativeName>
        <fullName>ORF1</fullName>
    </alternativeName>
</protein>
<keyword id="KW-1185">Reference proteome</keyword>
<sequence>MTKKVAIILANEFEDIEYSSPKEALENAGFNTVVIGDTANSEVVGKHGEKVTVDVGIAEAKPEDYDALLIPGGFSPDHLRGDTEGRYGTFAKYFTKNDVPTFAICHGPQILIDTDDLKGRTLTAVLNVRKDLSNAGAHVVDESVVVDNNIVTSRVPDDLDDFNREIVKQLQ</sequence>
<comment type="similarity">
    <text evidence="2">Belongs to the peptidase C56 family.</text>
</comment>
<feature type="chain" id="PRO_0000157840" description="Uncharacterized protein SAOUHSC_02013">
    <location>
        <begin position="1"/>
        <end position="171"/>
    </location>
</feature>
<feature type="domain" description="PfpI endopeptidase" evidence="1">
    <location>
        <begin position="3"/>
        <end position="171"/>
    </location>
</feature>
<dbReference type="EMBL" id="L19300">
    <property type="protein sequence ID" value="AAA18514.1"/>
    <property type="molecule type" value="Unassigned_DNA"/>
</dbReference>
<dbReference type="EMBL" id="CP000253">
    <property type="protein sequence ID" value="ABD31069.1"/>
    <property type="molecule type" value="Genomic_DNA"/>
</dbReference>
<dbReference type="RefSeq" id="WP_000163283.1">
    <property type="nucleotide sequence ID" value="NZ_LS483365.1"/>
</dbReference>
<dbReference type="RefSeq" id="YP_500510.1">
    <property type="nucleotide sequence ID" value="NC_007795.1"/>
</dbReference>
<dbReference type="SMR" id="P0A0K3"/>
<dbReference type="STRING" id="93061.SAOUHSC_02013"/>
<dbReference type="MEROPS" id="C56.001"/>
<dbReference type="PaxDb" id="1280-SAXN108_1905"/>
<dbReference type="GeneID" id="3920467"/>
<dbReference type="KEGG" id="sao:SAOUHSC_02013"/>
<dbReference type="PATRIC" id="fig|93061.5.peg.1828"/>
<dbReference type="eggNOG" id="COG0693">
    <property type="taxonomic scope" value="Bacteria"/>
</dbReference>
<dbReference type="HOGENOM" id="CLU_000445_44_4_9"/>
<dbReference type="OrthoDB" id="9792284at2"/>
<dbReference type="PRO" id="PR:P0A0K3"/>
<dbReference type="Proteomes" id="UP000008816">
    <property type="component" value="Chromosome"/>
</dbReference>
<dbReference type="CDD" id="cd03134">
    <property type="entry name" value="GATase1_PfpI_like"/>
    <property type="match status" value="1"/>
</dbReference>
<dbReference type="Gene3D" id="3.40.50.880">
    <property type="match status" value="1"/>
</dbReference>
<dbReference type="InterPro" id="IPR006286">
    <property type="entry name" value="C56_PfpI-like"/>
</dbReference>
<dbReference type="InterPro" id="IPR029062">
    <property type="entry name" value="Class_I_gatase-like"/>
</dbReference>
<dbReference type="InterPro" id="IPR002818">
    <property type="entry name" value="DJ-1/PfpI"/>
</dbReference>
<dbReference type="NCBIfam" id="TIGR01382">
    <property type="entry name" value="PfpI"/>
    <property type="match status" value="1"/>
</dbReference>
<dbReference type="PANTHER" id="PTHR42733">
    <property type="entry name" value="DJ-1 PROTEIN"/>
    <property type="match status" value="1"/>
</dbReference>
<dbReference type="PANTHER" id="PTHR42733:SF2">
    <property type="entry name" value="DJ-1_THIJ_PFPI FAMILY PROTEIN"/>
    <property type="match status" value="1"/>
</dbReference>
<dbReference type="Pfam" id="PF01965">
    <property type="entry name" value="DJ-1_PfpI"/>
    <property type="match status" value="1"/>
</dbReference>
<dbReference type="SUPFAM" id="SSF52317">
    <property type="entry name" value="Class I glutamine amidotransferase-like"/>
    <property type="match status" value="1"/>
</dbReference>
<dbReference type="PROSITE" id="PS51276">
    <property type="entry name" value="PEPTIDASE_C56_PFPI"/>
    <property type="match status" value="1"/>
</dbReference>
<organism>
    <name type="scientific">Staphylococcus aureus (strain NCTC 8325 / PS 47)</name>
    <dbReference type="NCBI Taxonomy" id="93061"/>
    <lineage>
        <taxon>Bacteria</taxon>
        <taxon>Bacillati</taxon>
        <taxon>Bacillota</taxon>
        <taxon>Bacilli</taxon>
        <taxon>Bacillales</taxon>
        <taxon>Staphylococcaceae</taxon>
        <taxon>Staphylococcus</taxon>
    </lineage>
</organism>
<gene>
    <name type="ordered locus">SAOUHSC_02013</name>
</gene>
<evidence type="ECO:0000255" key="1">
    <source>
        <dbReference type="PROSITE-ProRule" id="PRU00608"/>
    </source>
</evidence>
<evidence type="ECO:0000305" key="2"/>
<accession>P0A0K3</accession>
<accession>Q2G2H2</accession>
<accession>Q53719</accession>